<dbReference type="EC" id="5.1.3.9" evidence="1"/>
<dbReference type="EMBL" id="AL766843">
    <property type="protein sequence ID" value="CAD45677.1"/>
    <property type="molecule type" value="Genomic_DNA"/>
</dbReference>
<dbReference type="RefSeq" id="WP_001120330.1">
    <property type="nucleotide sequence ID" value="NC_004368.1"/>
</dbReference>
<dbReference type="SMR" id="P65518"/>
<dbReference type="KEGG" id="san:gbs0032"/>
<dbReference type="eggNOG" id="COG3010">
    <property type="taxonomic scope" value="Bacteria"/>
</dbReference>
<dbReference type="HOGENOM" id="CLU_086300_1_0_9"/>
<dbReference type="UniPathway" id="UPA00629">
    <property type="reaction ID" value="UER00682"/>
</dbReference>
<dbReference type="Proteomes" id="UP000000823">
    <property type="component" value="Chromosome"/>
</dbReference>
<dbReference type="GO" id="GO:0005829">
    <property type="term" value="C:cytosol"/>
    <property type="evidence" value="ECO:0007669"/>
    <property type="project" value="TreeGrafter"/>
</dbReference>
<dbReference type="GO" id="GO:0047465">
    <property type="term" value="F:N-acylglucosamine-6-phosphate 2-epimerase activity"/>
    <property type="evidence" value="ECO:0007669"/>
    <property type="project" value="UniProtKB-EC"/>
</dbReference>
<dbReference type="GO" id="GO:0005975">
    <property type="term" value="P:carbohydrate metabolic process"/>
    <property type="evidence" value="ECO:0007669"/>
    <property type="project" value="UniProtKB-UniRule"/>
</dbReference>
<dbReference type="GO" id="GO:0006053">
    <property type="term" value="P:N-acetylmannosamine catabolic process"/>
    <property type="evidence" value="ECO:0007669"/>
    <property type="project" value="TreeGrafter"/>
</dbReference>
<dbReference type="GO" id="GO:0019262">
    <property type="term" value="P:N-acetylneuraminate catabolic process"/>
    <property type="evidence" value="ECO:0007669"/>
    <property type="project" value="UniProtKB-UniRule"/>
</dbReference>
<dbReference type="CDD" id="cd04729">
    <property type="entry name" value="NanE"/>
    <property type="match status" value="1"/>
</dbReference>
<dbReference type="FunFam" id="3.20.20.70:FF:000035">
    <property type="entry name" value="Putative N-acetylmannosamine-6-phosphate 2-epimerase"/>
    <property type="match status" value="1"/>
</dbReference>
<dbReference type="Gene3D" id="3.20.20.70">
    <property type="entry name" value="Aldolase class I"/>
    <property type="match status" value="1"/>
</dbReference>
<dbReference type="HAMAP" id="MF_01235">
    <property type="entry name" value="ManNAc6P_epimer"/>
    <property type="match status" value="1"/>
</dbReference>
<dbReference type="InterPro" id="IPR013785">
    <property type="entry name" value="Aldolase_TIM"/>
</dbReference>
<dbReference type="InterPro" id="IPR007260">
    <property type="entry name" value="NanE"/>
</dbReference>
<dbReference type="InterPro" id="IPR011060">
    <property type="entry name" value="RibuloseP-bd_barrel"/>
</dbReference>
<dbReference type="NCBIfam" id="NF002231">
    <property type="entry name" value="PRK01130.1"/>
    <property type="match status" value="1"/>
</dbReference>
<dbReference type="PANTHER" id="PTHR36204">
    <property type="entry name" value="N-ACETYLMANNOSAMINE-6-PHOSPHATE 2-EPIMERASE-RELATED"/>
    <property type="match status" value="1"/>
</dbReference>
<dbReference type="PANTHER" id="PTHR36204:SF1">
    <property type="entry name" value="N-ACETYLMANNOSAMINE-6-PHOSPHATE 2-EPIMERASE-RELATED"/>
    <property type="match status" value="1"/>
</dbReference>
<dbReference type="Pfam" id="PF04131">
    <property type="entry name" value="NanE"/>
    <property type="match status" value="1"/>
</dbReference>
<dbReference type="SUPFAM" id="SSF51366">
    <property type="entry name" value="Ribulose-phoshate binding barrel"/>
    <property type="match status" value="1"/>
</dbReference>
<reference key="1">
    <citation type="journal article" date="2002" name="Mol. Microbiol.">
        <title>Genome sequence of Streptococcus agalactiae, a pathogen causing invasive neonatal disease.</title>
        <authorList>
            <person name="Glaser P."/>
            <person name="Rusniok C."/>
            <person name="Buchrieser C."/>
            <person name="Chevalier F."/>
            <person name="Frangeul L."/>
            <person name="Msadek T."/>
            <person name="Zouine M."/>
            <person name="Couve E."/>
            <person name="Lalioui L."/>
            <person name="Poyart C."/>
            <person name="Trieu-Cuot P."/>
            <person name="Kunst F."/>
        </authorList>
    </citation>
    <scope>NUCLEOTIDE SEQUENCE [LARGE SCALE GENOMIC DNA]</scope>
    <source>
        <strain>NEM316</strain>
    </source>
</reference>
<gene>
    <name evidence="1" type="primary">nanE</name>
    <name type="ordered locus">gbs0032</name>
</gene>
<keyword id="KW-0119">Carbohydrate metabolism</keyword>
<keyword id="KW-0413">Isomerase</keyword>
<feature type="chain" id="PRO_0000179803" description="Putative N-acetylmannosamine-6-phosphate 2-epimerase">
    <location>
        <begin position="1"/>
        <end position="232"/>
    </location>
</feature>
<organism>
    <name type="scientific">Streptococcus agalactiae serotype III (strain NEM316)</name>
    <dbReference type="NCBI Taxonomy" id="211110"/>
    <lineage>
        <taxon>Bacteria</taxon>
        <taxon>Bacillati</taxon>
        <taxon>Bacillota</taxon>
        <taxon>Bacilli</taxon>
        <taxon>Lactobacillales</taxon>
        <taxon>Streptococcaceae</taxon>
        <taxon>Streptococcus</taxon>
    </lineage>
</organism>
<evidence type="ECO:0000255" key="1">
    <source>
        <dbReference type="HAMAP-Rule" id="MF_01235"/>
    </source>
</evidence>
<sequence length="232" mass="25196">MPHLSKEAFKKQIKNGIIVSCQALPGEPLYTESGGVMPLLALAAQEAGAVGIRANSVRDIKEIQEVTNLPIIGIIKREYPPQEPFITATMTEVDQLASLDIAVIALDCTLRERHDGLSVVEFIQKIKRKYPEQLLMADISTFEEGKNAFEAGVDFVGTTLSGYTDYSRQEEGPDIELLNKLCQAGIDVIAEGKIHTPKQANEINHIGVAGIVVGGAITRPKEIAERFISGLS</sequence>
<name>NANE_STRA3</name>
<proteinExistence type="inferred from homology"/>
<comment type="function">
    <text evidence="1">Converts N-acetylmannosamine-6-phosphate (ManNAc-6-P) to N-acetylglucosamine-6-phosphate (GlcNAc-6-P).</text>
</comment>
<comment type="catalytic activity">
    <reaction evidence="1">
        <text>an N-acyl-D-glucosamine 6-phosphate = an N-acyl-D-mannosamine 6-phosphate</text>
        <dbReference type="Rhea" id="RHEA:23932"/>
        <dbReference type="ChEBI" id="CHEBI:57599"/>
        <dbReference type="ChEBI" id="CHEBI:57666"/>
        <dbReference type="EC" id="5.1.3.9"/>
    </reaction>
</comment>
<comment type="pathway">
    <text evidence="1">Amino-sugar metabolism; N-acetylneuraminate degradation; D-fructose 6-phosphate from N-acetylneuraminate: step 3/5.</text>
</comment>
<comment type="similarity">
    <text evidence="1">Belongs to the NanE family.</text>
</comment>
<accession>P65518</accession>
<accession>Q8E2F5</accession>
<accession>Q8E7W3</accession>
<protein>
    <recommendedName>
        <fullName evidence="1">Putative N-acetylmannosamine-6-phosphate 2-epimerase</fullName>
        <ecNumber evidence="1">5.1.3.9</ecNumber>
    </recommendedName>
    <alternativeName>
        <fullName evidence="1">ManNAc-6-P epimerase</fullName>
    </alternativeName>
</protein>